<organism>
    <name type="scientific">Homo sapiens</name>
    <name type="common">Human</name>
    <dbReference type="NCBI Taxonomy" id="9606"/>
    <lineage>
        <taxon>Eukaryota</taxon>
        <taxon>Metazoa</taxon>
        <taxon>Chordata</taxon>
        <taxon>Craniata</taxon>
        <taxon>Vertebrata</taxon>
        <taxon>Euteleostomi</taxon>
        <taxon>Mammalia</taxon>
        <taxon>Eutheria</taxon>
        <taxon>Euarchontoglires</taxon>
        <taxon>Primates</taxon>
        <taxon>Haplorrhini</taxon>
        <taxon>Catarrhini</taxon>
        <taxon>Hominidae</taxon>
        <taxon>Homo</taxon>
    </lineage>
</organism>
<proteinExistence type="evidence at protein level"/>
<accession>O60486</accession>
<accession>Q59H25</accession>
<keyword id="KW-0002">3D-structure</keyword>
<keyword id="KW-1015">Disulfide bond</keyword>
<keyword id="KW-0325">Glycoprotein</keyword>
<keyword id="KW-0472">Membrane</keyword>
<keyword id="KW-0597">Phosphoprotein</keyword>
<keyword id="KW-1267">Proteomics identification</keyword>
<keyword id="KW-0675">Receptor</keyword>
<keyword id="KW-1185">Reference proteome</keyword>
<keyword id="KW-0732">Signal</keyword>
<keyword id="KW-0812">Transmembrane</keyword>
<keyword id="KW-1133">Transmembrane helix</keyword>
<dbReference type="EMBL" id="AF030339">
    <property type="protein sequence ID" value="AAC18823.1"/>
    <property type="molecule type" value="mRNA"/>
</dbReference>
<dbReference type="EMBL" id="AB208934">
    <property type="protein sequence ID" value="BAD92171.1"/>
    <property type="molecule type" value="mRNA"/>
</dbReference>
<dbReference type="CCDS" id="CCDS9049.1"/>
<dbReference type="PIR" id="T09074">
    <property type="entry name" value="T09074"/>
</dbReference>
<dbReference type="RefSeq" id="NP_005752.1">
    <property type="nucleotide sequence ID" value="NM_005761.3"/>
</dbReference>
<dbReference type="PDB" id="3KUZ">
    <property type="method" value="X-ray"/>
    <property type="resolution" value="2.30 A"/>
    <property type="chains" value="A/B=1198-1305"/>
</dbReference>
<dbReference type="PDB" id="3NVN">
    <property type="method" value="X-ray"/>
    <property type="resolution" value="2.26 A"/>
    <property type="chains" value="B=35-507"/>
</dbReference>
<dbReference type="PDB" id="3NVQ">
    <property type="method" value="X-ray"/>
    <property type="resolution" value="2.40 A"/>
    <property type="chains" value="B/F=35-507"/>
</dbReference>
<dbReference type="PDB" id="6VXK">
    <property type="method" value="EM"/>
    <property type="resolution" value="3.10 A"/>
    <property type="chains" value="B/D=35-1568"/>
</dbReference>
<dbReference type="PDBsum" id="3KUZ"/>
<dbReference type="PDBsum" id="3NVN"/>
<dbReference type="PDBsum" id="3NVQ"/>
<dbReference type="PDBsum" id="6VXK"/>
<dbReference type="EMDB" id="EMD-21442"/>
<dbReference type="SMR" id="O60486"/>
<dbReference type="BioGRID" id="115456">
    <property type="interactions" value="13"/>
</dbReference>
<dbReference type="CORUM" id="O60486"/>
<dbReference type="FunCoup" id="O60486">
    <property type="interactions" value="78"/>
</dbReference>
<dbReference type="IntAct" id="O60486">
    <property type="interactions" value="16"/>
</dbReference>
<dbReference type="MINT" id="O60486"/>
<dbReference type="STRING" id="9606.ENSP00000258526"/>
<dbReference type="GlyConnect" id="725">
    <property type="glycosylation" value="8 N-Linked glycans (5 sites)"/>
</dbReference>
<dbReference type="GlyCosmos" id="O60486">
    <property type="glycosylation" value="17 sites, 14 glycans"/>
</dbReference>
<dbReference type="GlyGen" id="O60486">
    <property type="glycosylation" value="22 sites, 29 N-linked glycans (12 sites), 1 O-linked glycan (1 site)"/>
</dbReference>
<dbReference type="iPTMnet" id="O60486"/>
<dbReference type="PhosphoSitePlus" id="O60486"/>
<dbReference type="BioMuta" id="PLXNC1"/>
<dbReference type="jPOST" id="O60486"/>
<dbReference type="MassIVE" id="O60486"/>
<dbReference type="PaxDb" id="9606-ENSP00000258526"/>
<dbReference type="PeptideAtlas" id="O60486"/>
<dbReference type="ProteomicsDB" id="49424"/>
<dbReference type="Pumba" id="O60486"/>
<dbReference type="Antibodypedia" id="30073">
    <property type="antibodies" value="118 antibodies from 22 providers"/>
</dbReference>
<dbReference type="DNASU" id="10154"/>
<dbReference type="Ensembl" id="ENST00000258526.9">
    <property type="protein sequence ID" value="ENSP00000258526.4"/>
    <property type="gene ID" value="ENSG00000136040.9"/>
</dbReference>
<dbReference type="GeneID" id="10154"/>
<dbReference type="KEGG" id="hsa:10154"/>
<dbReference type="MANE-Select" id="ENST00000258526.9">
    <property type="protein sequence ID" value="ENSP00000258526.4"/>
    <property type="RefSeq nucleotide sequence ID" value="NM_005761.3"/>
    <property type="RefSeq protein sequence ID" value="NP_005752.1"/>
</dbReference>
<dbReference type="UCSC" id="uc001tdc.3">
    <property type="organism name" value="human"/>
</dbReference>
<dbReference type="AGR" id="HGNC:9106"/>
<dbReference type="CTD" id="10154"/>
<dbReference type="DisGeNET" id="10154"/>
<dbReference type="GeneCards" id="PLXNC1"/>
<dbReference type="HGNC" id="HGNC:9106">
    <property type="gene designation" value="PLXNC1"/>
</dbReference>
<dbReference type="HPA" id="ENSG00000136040">
    <property type="expression patterns" value="Low tissue specificity"/>
</dbReference>
<dbReference type="MIM" id="604259">
    <property type="type" value="gene"/>
</dbReference>
<dbReference type="neXtProt" id="NX_O60486"/>
<dbReference type="OpenTargets" id="ENSG00000136040"/>
<dbReference type="PharmGKB" id="PA33432"/>
<dbReference type="VEuPathDB" id="HostDB:ENSG00000136040"/>
<dbReference type="eggNOG" id="KOG3610">
    <property type="taxonomic scope" value="Eukaryota"/>
</dbReference>
<dbReference type="GeneTree" id="ENSGT01020000230394"/>
<dbReference type="HOGENOM" id="CLU_004205_0_0_1"/>
<dbReference type="InParanoid" id="O60486"/>
<dbReference type="OMA" id="ETPIFHR"/>
<dbReference type="OrthoDB" id="384877at2759"/>
<dbReference type="PAN-GO" id="O60486">
    <property type="GO annotations" value="9 GO annotations based on evolutionary models"/>
</dbReference>
<dbReference type="PhylomeDB" id="O60486"/>
<dbReference type="TreeFam" id="TF312962"/>
<dbReference type="PathwayCommons" id="O60486"/>
<dbReference type="Reactome" id="R-HSA-416700">
    <property type="pathway name" value="Other semaphorin interactions"/>
</dbReference>
<dbReference type="SignaLink" id="O60486"/>
<dbReference type="SIGNOR" id="O60486"/>
<dbReference type="BioGRID-ORCS" id="10154">
    <property type="hits" value="10 hits in 1149 CRISPR screens"/>
</dbReference>
<dbReference type="ChiTaRS" id="PLXNC1">
    <property type="organism name" value="human"/>
</dbReference>
<dbReference type="EvolutionaryTrace" id="O60486"/>
<dbReference type="GenomeRNAi" id="10154"/>
<dbReference type="Pharos" id="O60486">
    <property type="development level" value="Tbio"/>
</dbReference>
<dbReference type="PRO" id="PR:O60486"/>
<dbReference type="Proteomes" id="UP000005640">
    <property type="component" value="Chromosome 12"/>
</dbReference>
<dbReference type="RNAct" id="O60486">
    <property type="molecule type" value="protein"/>
</dbReference>
<dbReference type="Bgee" id="ENSG00000136040">
    <property type="expression patterns" value="Expressed in buccal mucosa cell and 196 other cell types or tissues"/>
</dbReference>
<dbReference type="ExpressionAtlas" id="O60486">
    <property type="expression patterns" value="baseline and differential"/>
</dbReference>
<dbReference type="GO" id="GO:0150053">
    <property type="term" value="C:cerebellar climbing fiber to Purkinje cell synapse"/>
    <property type="evidence" value="ECO:0007669"/>
    <property type="project" value="Ensembl"/>
</dbReference>
<dbReference type="GO" id="GO:0016020">
    <property type="term" value="C:membrane"/>
    <property type="evidence" value="ECO:0007005"/>
    <property type="project" value="UniProtKB"/>
</dbReference>
<dbReference type="GO" id="GO:0005886">
    <property type="term" value="C:plasma membrane"/>
    <property type="evidence" value="ECO:0000318"/>
    <property type="project" value="GO_Central"/>
</dbReference>
<dbReference type="GO" id="GO:0002116">
    <property type="term" value="C:semaphorin receptor complex"/>
    <property type="evidence" value="ECO:0000318"/>
    <property type="project" value="GO_Central"/>
</dbReference>
<dbReference type="GO" id="GO:0017154">
    <property type="term" value="F:semaphorin receptor activity"/>
    <property type="evidence" value="ECO:0000318"/>
    <property type="project" value="GO_Central"/>
</dbReference>
<dbReference type="GO" id="GO:0005102">
    <property type="term" value="F:signaling receptor binding"/>
    <property type="evidence" value="ECO:0000304"/>
    <property type="project" value="ProtInc"/>
</dbReference>
<dbReference type="GO" id="GO:0007155">
    <property type="term" value="P:cell adhesion"/>
    <property type="evidence" value="ECO:0000304"/>
    <property type="project" value="ProtInc"/>
</dbReference>
<dbReference type="GO" id="GO:0007162">
    <property type="term" value="P:negative regulation of cell adhesion"/>
    <property type="evidence" value="ECO:0000318"/>
    <property type="project" value="GO_Central"/>
</dbReference>
<dbReference type="GO" id="GO:0050772">
    <property type="term" value="P:positive regulation of axonogenesis"/>
    <property type="evidence" value="ECO:0000318"/>
    <property type="project" value="GO_Central"/>
</dbReference>
<dbReference type="GO" id="GO:0030334">
    <property type="term" value="P:regulation of cell migration"/>
    <property type="evidence" value="ECO:0000318"/>
    <property type="project" value="GO_Central"/>
</dbReference>
<dbReference type="GO" id="GO:0008360">
    <property type="term" value="P:regulation of cell shape"/>
    <property type="evidence" value="ECO:0000318"/>
    <property type="project" value="GO_Central"/>
</dbReference>
<dbReference type="GO" id="GO:1905806">
    <property type="term" value="P:regulation of synapse pruning"/>
    <property type="evidence" value="ECO:0007669"/>
    <property type="project" value="Ensembl"/>
</dbReference>
<dbReference type="GO" id="GO:0071526">
    <property type="term" value="P:semaphorin-plexin signaling pathway"/>
    <property type="evidence" value="ECO:0000318"/>
    <property type="project" value="GO_Central"/>
</dbReference>
<dbReference type="GO" id="GO:0007416">
    <property type="term" value="P:synapse assembly"/>
    <property type="evidence" value="ECO:0000318"/>
    <property type="project" value="GO_Central"/>
</dbReference>
<dbReference type="CDD" id="cd00102">
    <property type="entry name" value="IPT"/>
    <property type="match status" value="2"/>
</dbReference>
<dbReference type="CDD" id="cd12789">
    <property type="entry name" value="RasGAP_plexin_C1"/>
    <property type="match status" value="1"/>
</dbReference>
<dbReference type="CDD" id="cd11246">
    <property type="entry name" value="Sema_plexin_C1"/>
    <property type="match status" value="1"/>
</dbReference>
<dbReference type="FunFam" id="1.10.506.10:FF:000033">
    <property type="entry name" value="PLeXin"/>
    <property type="match status" value="1"/>
</dbReference>
<dbReference type="FunFam" id="1.10.506.10:FF:000043">
    <property type="entry name" value="Plexin C1"/>
    <property type="match status" value="1"/>
</dbReference>
<dbReference type="FunFam" id="2.130.10.10:FF:000316">
    <property type="entry name" value="Plexin C1"/>
    <property type="match status" value="1"/>
</dbReference>
<dbReference type="FunFam" id="2.60.40.10:FF:000797">
    <property type="entry name" value="Plexin C1"/>
    <property type="match status" value="1"/>
</dbReference>
<dbReference type="FunFam" id="3.30.1680.10:FF:000020">
    <property type="entry name" value="Plexin C1"/>
    <property type="match status" value="1"/>
</dbReference>
<dbReference type="Gene3D" id="1.10.506.10">
    <property type="entry name" value="GTPase Activation - p120gap, domain 1"/>
    <property type="match status" value="1"/>
</dbReference>
<dbReference type="Gene3D" id="2.60.40.10">
    <property type="entry name" value="Immunoglobulins"/>
    <property type="match status" value="1"/>
</dbReference>
<dbReference type="Gene3D" id="3.30.1680.10">
    <property type="entry name" value="ligand-binding face of the semaphorins, domain 2"/>
    <property type="match status" value="1"/>
</dbReference>
<dbReference type="Gene3D" id="3.10.20.90">
    <property type="entry name" value="Phosphatidylinositol 3-kinase Catalytic Subunit, Chain A, domain 1"/>
    <property type="match status" value="1"/>
</dbReference>
<dbReference type="Gene3D" id="2.130.10.10">
    <property type="entry name" value="YVTN repeat-like/Quinoprotein amine dehydrogenase"/>
    <property type="match status" value="1"/>
</dbReference>
<dbReference type="InterPro" id="IPR013783">
    <property type="entry name" value="Ig-like_fold"/>
</dbReference>
<dbReference type="InterPro" id="IPR002909">
    <property type="entry name" value="IPT_dom"/>
</dbReference>
<dbReference type="InterPro" id="IPR031148">
    <property type="entry name" value="Plexin"/>
</dbReference>
<dbReference type="InterPro" id="IPR041853">
    <property type="entry name" value="Plexin-C1_Sema"/>
</dbReference>
<dbReference type="InterPro" id="IPR013548">
    <property type="entry name" value="Plexin_cytoplasmic_RasGAP_dom"/>
</dbReference>
<dbReference type="InterPro" id="IPR046800">
    <property type="entry name" value="Plexin_RBD"/>
</dbReference>
<dbReference type="InterPro" id="IPR002165">
    <property type="entry name" value="Plexin_repeat"/>
</dbReference>
<dbReference type="InterPro" id="IPR016201">
    <property type="entry name" value="PSI"/>
</dbReference>
<dbReference type="InterPro" id="IPR008936">
    <property type="entry name" value="Rho_GTPase_activation_prot"/>
</dbReference>
<dbReference type="InterPro" id="IPR001627">
    <property type="entry name" value="Semap_dom"/>
</dbReference>
<dbReference type="InterPro" id="IPR036352">
    <property type="entry name" value="Semap_dom_sf"/>
</dbReference>
<dbReference type="InterPro" id="IPR015943">
    <property type="entry name" value="WD40/YVTN_repeat-like_dom_sf"/>
</dbReference>
<dbReference type="PANTHER" id="PTHR22625">
    <property type="entry name" value="PLEXIN"/>
    <property type="match status" value="1"/>
</dbReference>
<dbReference type="PANTHER" id="PTHR22625:SF4">
    <property type="entry name" value="PLEXIN-C1"/>
    <property type="match status" value="1"/>
</dbReference>
<dbReference type="Pfam" id="PF08337">
    <property type="entry name" value="Plexin_cytopl"/>
    <property type="match status" value="1"/>
</dbReference>
<dbReference type="Pfam" id="PF20170">
    <property type="entry name" value="Plexin_RBD"/>
    <property type="match status" value="1"/>
</dbReference>
<dbReference type="Pfam" id="PF01437">
    <property type="entry name" value="PSI"/>
    <property type="match status" value="1"/>
</dbReference>
<dbReference type="Pfam" id="PF01833">
    <property type="entry name" value="TIG"/>
    <property type="match status" value="2"/>
</dbReference>
<dbReference type="SMART" id="SM00429">
    <property type="entry name" value="IPT"/>
    <property type="match status" value="2"/>
</dbReference>
<dbReference type="SMART" id="SM00423">
    <property type="entry name" value="PSI"/>
    <property type="match status" value="2"/>
</dbReference>
<dbReference type="SMART" id="SM00630">
    <property type="entry name" value="Sema"/>
    <property type="match status" value="1"/>
</dbReference>
<dbReference type="SUPFAM" id="SSF48350">
    <property type="entry name" value="GTPase activation domain, GAP"/>
    <property type="match status" value="1"/>
</dbReference>
<dbReference type="SUPFAM" id="SSF103575">
    <property type="entry name" value="Plexin repeat"/>
    <property type="match status" value="1"/>
</dbReference>
<dbReference type="SUPFAM" id="SSF101912">
    <property type="entry name" value="Sema domain"/>
    <property type="match status" value="1"/>
</dbReference>
<dbReference type="PROSITE" id="PS51004">
    <property type="entry name" value="SEMA"/>
    <property type="match status" value="1"/>
</dbReference>
<name>PLXC1_HUMAN</name>
<protein>
    <recommendedName>
        <fullName>Plexin-C1</fullName>
    </recommendedName>
    <alternativeName>
        <fullName>Virus-encoded semaphorin protein receptor</fullName>
    </alternativeName>
    <cdAntigenName>CD232</cdAntigenName>
</protein>
<reference key="1">
    <citation type="journal article" date="1998" name="Immunity">
        <title>A poxvirus-encoded semaphorin induces cytokine production from monocytes and binds to a novel cellular semaphorin receptor, VESPR.</title>
        <authorList>
            <person name="Comeau M.R."/>
            <person name="Johnson R."/>
            <person name="DuBose R.F."/>
            <person name="Petersen M."/>
            <person name="Gearing P."/>
            <person name="VandenBos T."/>
            <person name="Park L."/>
            <person name="Farrah T."/>
            <person name="Buller R.M."/>
            <person name="Cohen J.I."/>
            <person name="Strockbine L.D."/>
            <person name="Rauch C."/>
            <person name="Spriggs M.K."/>
        </authorList>
    </citation>
    <scope>NUCLEOTIDE SEQUENCE [MRNA]</scope>
    <scope>IDENTIFICATION BY MASS SPECTROMETRY</scope>
    <scope>GLYCOSYLATION</scope>
    <scope>INTERACTION WITH VACCINIA VIRUS PROTEIN A39R AND HERPESVIRUS SEMA</scope>
    <scope>TISSUE SPECIFICITY</scope>
    <source>
        <tissue>Foreskin</tissue>
    </source>
</reference>
<reference key="2">
    <citation type="submission" date="2005-03" db="EMBL/GenBank/DDBJ databases">
        <authorList>
            <person name="Totoki Y."/>
            <person name="Toyoda A."/>
            <person name="Takeda T."/>
            <person name="Sakaki Y."/>
            <person name="Tanaka A."/>
            <person name="Yokoyama S."/>
            <person name="Ohara O."/>
            <person name="Nagase T."/>
            <person name="Kikuno R.F."/>
        </authorList>
    </citation>
    <scope>NUCLEOTIDE SEQUENCE [LARGE SCALE MRNA] OF 358-1568</scope>
    <source>
        <tissue>Brain</tissue>
    </source>
</reference>
<reference key="3">
    <citation type="submission" date="2009-12" db="PDB data bank">
        <title>Crystal structure of the ubiquitin like domain of PLXNC1.</title>
        <authorList>
            <consortium name="Structural genomics consortium (SGC)"/>
        </authorList>
    </citation>
    <scope>X-RAY CRYSTALLOGRAPHY (2.3 ANGSTROMS) OF 1198-1305</scope>
</reference>
<reference key="4">
    <citation type="journal article" date="2010" name="Cell">
        <title>Structural basis of semaphorin-plexin recognition and viral mimicry from Sema7A and A39R complexes with PlexinC1.</title>
        <authorList>
            <person name="Liu H."/>
            <person name="Juo Z.S."/>
            <person name="Shim A.H."/>
            <person name="Focia P.J."/>
            <person name="Chen X."/>
            <person name="Garcia K.C."/>
            <person name="He X."/>
        </authorList>
    </citation>
    <scope>X-RAY CRYSTALLOGRAPHY (2.26 ANGSTROMS) OF 35-507 IN COMPLEXES WITH SEMA7A AND SMALLPOX VIRUS A39R</scope>
    <scope>FUNCTION</scope>
    <scope>SUBUNIT</scope>
    <scope>DISULFIDE BONDS</scope>
    <scope>GLYCOSYLATION AT ASN-86; ASN-141; ASN-149; ASN-241; ASN-252; ASN-386 AND ASN-407</scope>
</reference>
<feature type="signal peptide" evidence="3">
    <location>
        <begin position="1"/>
        <end position="34"/>
    </location>
</feature>
<feature type="chain" id="PRO_0000232749" description="Plexin-C1">
    <location>
        <begin position="35"/>
        <end position="1568"/>
    </location>
</feature>
<feature type="topological domain" description="Extracellular" evidence="3">
    <location>
        <begin position="35"/>
        <end position="944"/>
    </location>
</feature>
<feature type="transmembrane region" description="Helical" evidence="3">
    <location>
        <begin position="945"/>
        <end position="965"/>
    </location>
</feature>
<feature type="topological domain" description="Cytoplasmic" evidence="3">
    <location>
        <begin position="966"/>
        <end position="1568"/>
    </location>
</feature>
<feature type="domain" description="Sema" evidence="4">
    <location>
        <begin position="35"/>
        <end position="452"/>
    </location>
</feature>
<feature type="modified residue" description="Phosphoserine" evidence="2">
    <location>
        <position position="978"/>
    </location>
</feature>
<feature type="glycosylation site" description="N-linked (GlcNAc...) asparagine" evidence="6">
    <location>
        <position position="86"/>
    </location>
</feature>
<feature type="glycosylation site" description="N-linked (GlcNAc...) asparagine" evidence="6">
    <location>
        <position position="141"/>
    </location>
</feature>
<feature type="glycosylation site" description="N-linked (GlcNAc...) asparagine" evidence="6">
    <location>
        <position position="149"/>
    </location>
</feature>
<feature type="glycosylation site" description="N-linked (GlcNAc...) asparagine" evidence="6">
    <location>
        <position position="241"/>
    </location>
</feature>
<feature type="glycosylation site" description="N-linked (GlcNAc...) asparagine" evidence="6">
    <location>
        <position position="252"/>
    </location>
</feature>
<feature type="glycosylation site" description="N-linked (GlcNAc...) asparagine" evidence="6">
    <location>
        <position position="386"/>
    </location>
</feature>
<feature type="glycosylation site" description="N-linked (GlcNAc...) asparagine" evidence="6">
    <location>
        <position position="407"/>
    </location>
</feature>
<feature type="glycosylation site" description="N-linked (GlcNAc...) asparagine" evidence="3">
    <location>
        <position position="548"/>
    </location>
</feature>
<feature type="glycosylation site" description="N-linked (GlcNAc...) asparagine" evidence="3">
    <location>
        <position position="582"/>
    </location>
</feature>
<feature type="glycosylation site" description="N-linked (GlcNAc...) asparagine" evidence="3">
    <location>
        <position position="653"/>
    </location>
</feature>
<feature type="glycosylation site" description="N-linked (GlcNAc...) asparagine" evidence="3">
    <location>
        <position position="692"/>
    </location>
</feature>
<feature type="glycosylation site" description="N-linked (GlcNAc...) asparagine" evidence="3">
    <location>
        <position position="771"/>
    </location>
</feature>
<feature type="glycosylation site" description="N-linked (GlcNAc...) asparagine" evidence="3">
    <location>
        <position position="796"/>
    </location>
</feature>
<feature type="glycosylation site" description="N-linked (GlcNAc...) asparagine" evidence="3">
    <location>
        <position position="821"/>
    </location>
</feature>
<feature type="glycosylation site" description="N-linked (GlcNAc...) asparagine" evidence="5">
    <location>
        <position position="871"/>
    </location>
</feature>
<feature type="glycosylation site" description="N-linked (GlcNAc...) asparagine" evidence="3">
    <location>
        <position position="890"/>
    </location>
</feature>
<feature type="disulfide bond" evidence="4 6">
    <location>
        <begin position="64"/>
        <end position="87"/>
    </location>
</feature>
<feature type="disulfide bond" evidence="4 6">
    <location>
        <begin position="156"/>
        <end position="194"/>
    </location>
</feature>
<feature type="disulfide bond" evidence="4 6">
    <location>
        <begin position="226"/>
        <end position="354"/>
    </location>
</feature>
<feature type="disulfide bond" evidence="4 6">
    <location>
        <begin position="283"/>
        <end position="329"/>
    </location>
</feature>
<feature type="disulfide bond" evidence="4 6">
    <location>
        <begin position="455"/>
        <end position="472"/>
    </location>
</feature>
<feature type="disulfide bond" evidence="4 6">
    <location>
        <begin position="461"/>
        <end position="506"/>
    </location>
</feature>
<feature type="disulfide bond" evidence="4 6">
    <location>
        <begin position="464"/>
        <end position="481"/>
    </location>
</feature>
<feature type="disulfide bond" evidence="4 6">
    <location>
        <begin position="475"/>
        <end position="487"/>
    </location>
</feature>
<feature type="sequence variant" id="VAR_050602" description="In dbSNP:rs11107500.">
    <original>E</original>
    <variation>K</variation>
    <location>
        <position position="1499"/>
    </location>
</feature>
<feature type="sequence conflict" description="In Ref. 2; BAD92171." evidence="8" ref="2">
    <original>K</original>
    <variation>R</variation>
    <location>
        <position position="671"/>
    </location>
</feature>
<feature type="strand" evidence="10">
    <location>
        <begin position="39"/>
        <end position="41"/>
    </location>
</feature>
<feature type="strand" evidence="10">
    <location>
        <begin position="48"/>
        <end position="51"/>
    </location>
</feature>
<feature type="strand" evidence="10">
    <location>
        <begin position="53"/>
        <end position="55"/>
    </location>
</feature>
<feature type="strand" evidence="10">
    <location>
        <begin position="57"/>
        <end position="60"/>
    </location>
</feature>
<feature type="strand" evidence="10">
    <location>
        <begin position="62"/>
        <end position="68"/>
    </location>
</feature>
<feature type="strand" evidence="10">
    <location>
        <begin position="75"/>
        <end position="85"/>
    </location>
</feature>
<feature type="strand" evidence="10">
    <location>
        <begin position="98"/>
        <end position="100"/>
    </location>
</feature>
<feature type="strand" evidence="10">
    <location>
        <begin position="105"/>
        <end position="113"/>
    </location>
</feature>
<feature type="strand" evidence="11">
    <location>
        <begin position="117"/>
        <end position="119"/>
    </location>
</feature>
<feature type="strand" evidence="10">
    <location>
        <begin position="122"/>
        <end position="128"/>
    </location>
</feature>
<feature type="helix" evidence="10">
    <location>
        <begin position="129"/>
        <end position="132"/>
    </location>
</feature>
<feature type="strand" evidence="10">
    <location>
        <begin position="134"/>
        <end position="140"/>
    </location>
</feature>
<feature type="strand" evidence="12">
    <location>
        <begin position="142"/>
        <end position="144"/>
    </location>
</feature>
<feature type="strand" evidence="10">
    <location>
        <begin position="149"/>
        <end position="154"/>
    </location>
</feature>
<feature type="strand" evidence="10">
    <location>
        <begin position="162"/>
        <end position="169"/>
    </location>
</feature>
<feature type="turn" evidence="10">
    <location>
        <begin position="170"/>
        <end position="173"/>
    </location>
</feature>
<feature type="strand" evidence="10">
    <location>
        <begin position="174"/>
        <end position="181"/>
    </location>
</feature>
<feature type="turn" evidence="10">
    <location>
        <begin position="190"/>
        <end position="192"/>
    </location>
</feature>
<feature type="helix" evidence="10">
    <location>
        <begin position="198"/>
        <end position="200"/>
    </location>
</feature>
<feature type="strand" evidence="10">
    <location>
        <begin position="203"/>
        <end position="212"/>
    </location>
</feature>
<feature type="helix" evidence="10">
    <location>
        <begin position="213"/>
        <end position="215"/>
    </location>
</feature>
<feature type="strand" evidence="10">
    <location>
        <begin position="221"/>
        <end position="225"/>
    </location>
</feature>
<feature type="strand" evidence="10">
    <location>
        <begin position="232"/>
        <end position="234"/>
    </location>
</feature>
<feature type="strand" evidence="11">
    <location>
        <begin position="238"/>
        <end position="240"/>
    </location>
</feature>
<feature type="strand" evidence="10">
    <location>
        <begin position="241"/>
        <end position="252"/>
    </location>
</feature>
<feature type="turn" evidence="10">
    <location>
        <begin position="253"/>
        <end position="256"/>
    </location>
</feature>
<feature type="strand" evidence="10">
    <location>
        <begin position="263"/>
        <end position="272"/>
    </location>
</feature>
<feature type="strand" evidence="10">
    <location>
        <begin position="275"/>
        <end position="281"/>
    </location>
</feature>
<feature type="strand" evidence="12">
    <location>
        <begin position="287"/>
        <end position="289"/>
    </location>
</feature>
<feature type="strand" evidence="10">
    <location>
        <begin position="293"/>
        <end position="299"/>
    </location>
</feature>
<feature type="turn" evidence="10">
    <location>
        <begin position="301"/>
        <end position="303"/>
    </location>
</feature>
<feature type="strand" evidence="10">
    <location>
        <begin position="305"/>
        <end position="311"/>
    </location>
</feature>
<feature type="strand" evidence="10">
    <location>
        <begin position="316"/>
        <end position="318"/>
    </location>
</feature>
<feature type="strand" evidence="10">
    <location>
        <begin position="325"/>
        <end position="332"/>
    </location>
</feature>
<feature type="helix" evidence="10">
    <location>
        <begin position="333"/>
        <end position="339"/>
    </location>
</feature>
<feature type="strand" evidence="10">
    <location>
        <begin position="345"/>
        <end position="347"/>
    </location>
</feature>
<feature type="strand" evidence="11">
    <location>
        <begin position="350"/>
        <end position="352"/>
    </location>
</feature>
<feature type="strand" evidence="10">
    <location>
        <begin position="354"/>
        <end position="357"/>
    </location>
</feature>
<feature type="strand" evidence="10">
    <location>
        <begin position="361"/>
        <end position="363"/>
    </location>
</feature>
<feature type="turn" evidence="11">
    <location>
        <begin position="367"/>
        <end position="369"/>
    </location>
</feature>
<feature type="strand" evidence="10">
    <location>
        <begin position="371"/>
        <end position="394"/>
    </location>
</feature>
<feature type="strand" evidence="10">
    <location>
        <begin position="397"/>
        <end position="403"/>
    </location>
</feature>
<feature type="strand" evidence="12">
    <location>
        <begin position="406"/>
        <end position="408"/>
    </location>
</feature>
<feature type="strand" evidence="10">
    <location>
        <begin position="414"/>
        <end position="418"/>
    </location>
</feature>
<feature type="strand" evidence="12">
    <location>
        <begin position="433"/>
        <end position="435"/>
    </location>
</feature>
<feature type="strand" evidence="10">
    <location>
        <begin position="438"/>
        <end position="443"/>
    </location>
</feature>
<feature type="strand" evidence="10">
    <location>
        <begin position="446"/>
        <end position="452"/>
    </location>
</feature>
<feature type="helix" evidence="11">
    <location>
        <begin position="455"/>
        <end position="457"/>
    </location>
</feature>
<feature type="helix" evidence="10">
    <location>
        <begin position="461"/>
        <end position="465"/>
    </location>
</feature>
<feature type="strand" evidence="10">
    <location>
        <begin position="472"/>
        <end position="475"/>
    </location>
</feature>
<feature type="turn" evidence="10">
    <location>
        <begin position="476"/>
        <end position="479"/>
    </location>
</feature>
<feature type="strand" evidence="10">
    <location>
        <begin position="480"/>
        <end position="483"/>
    </location>
</feature>
<feature type="helix" evidence="10">
    <location>
        <begin position="484"/>
        <end position="486"/>
    </location>
</feature>
<feature type="strand" evidence="11">
    <location>
        <begin position="491"/>
        <end position="493"/>
    </location>
</feature>
<feature type="turn" evidence="10">
    <location>
        <begin position="499"/>
        <end position="501"/>
    </location>
</feature>
<feature type="helix" evidence="10">
    <location>
        <begin position="503"/>
        <end position="505"/>
    </location>
</feature>
<feature type="strand" evidence="12">
    <location>
        <begin position="508"/>
        <end position="510"/>
    </location>
</feature>
<feature type="strand" evidence="12">
    <location>
        <begin position="522"/>
        <end position="525"/>
    </location>
</feature>
<feature type="strand" evidence="12">
    <location>
        <begin position="532"/>
        <end position="536"/>
    </location>
</feature>
<feature type="strand" evidence="12">
    <location>
        <begin position="546"/>
        <end position="548"/>
    </location>
</feature>
<feature type="strand" evidence="12">
    <location>
        <begin position="574"/>
        <end position="580"/>
    </location>
</feature>
<feature type="strand" evidence="12">
    <location>
        <begin position="582"/>
        <end position="585"/>
    </location>
</feature>
<feature type="strand" evidence="12">
    <location>
        <begin position="663"/>
        <end position="668"/>
    </location>
</feature>
<feature type="strand" evidence="12">
    <location>
        <begin position="670"/>
        <end position="673"/>
    </location>
</feature>
<feature type="strand" evidence="12">
    <location>
        <begin position="677"/>
        <end position="685"/>
    </location>
</feature>
<feature type="strand" evidence="12">
    <location>
        <begin position="694"/>
        <end position="698"/>
    </location>
</feature>
<feature type="strand" evidence="12">
    <location>
        <begin position="700"/>
        <end position="703"/>
    </location>
</feature>
<feature type="strand" evidence="12">
    <location>
        <begin position="706"/>
        <end position="709"/>
    </location>
</feature>
<feature type="strand" evidence="12">
    <location>
        <begin position="718"/>
        <end position="723"/>
    </location>
</feature>
<feature type="strand" evidence="12">
    <location>
        <begin position="730"/>
        <end position="736"/>
    </location>
</feature>
<feature type="strand" evidence="12">
    <location>
        <begin position="738"/>
        <end position="741"/>
    </location>
</feature>
<feature type="strand" evidence="12">
    <location>
        <begin position="743"/>
        <end position="751"/>
    </location>
</feature>
<feature type="strand" evidence="12">
    <location>
        <begin position="756"/>
        <end position="761"/>
    </location>
</feature>
<feature type="strand" evidence="12">
    <location>
        <begin position="763"/>
        <end position="765"/>
    </location>
</feature>
<feature type="strand" evidence="12">
    <location>
        <begin position="770"/>
        <end position="777"/>
    </location>
</feature>
<feature type="strand" evidence="12">
    <location>
        <begin position="784"/>
        <end position="788"/>
    </location>
</feature>
<feature type="strand" evidence="12">
    <location>
        <begin position="803"/>
        <end position="809"/>
    </location>
</feature>
<feature type="strand" evidence="12">
    <location>
        <begin position="821"/>
        <end position="828"/>
    </location>
</feature>
<feature type="strand" evidence="12">
    <location>
        <begin position="831"/>
        <end position="841"/>
    </location>
</feature>
<feature type="strand" evidence="12">
    <location>
        <begin position="846"/>
        <end position="849"/>
    </location>
</feature>
<feature type="strand" evidence="12">
    <location>
        <begin position="859"/>
        <end position="863"/>
    </location>
</feature>
<feature type="helix" evidence="12">
    <location>
        <begin position="874"/>
        <end position="876"/>
    </location>
</feature>
<feature type="strand" evidence="12">
    <location>
        <begin position="877"/>
        <end position="880"/>
    </location>
</feature>
<feature type="strand" evidence="12">
    <location>
        <begin position="889"/>
        <end position="893"/>
    </location>
</feature>
<feature type="strand" evidence="12">
    <location>
        <begin position="905"/>
        <end position="909"/>
    </location>
</feature>
<feature type="strand" evidence="12">
    <location>
        <begin position="926"/>
        <end position="929"/>
    </location>
</feature>
<feature type="strand" evidence="12">
    <location>
        <begin position="932"/>
        <end position="934"/>
    </location>
</feature>
<feature type="strand" evidence="9">
    <location>
        <begin position="1198"/>
        <end position="1205"/>
    </location>
</feature>
<feature type="strand" evidence="9">
    <location>
        <begin position="1219"/>
        <end position="1225"/>
    </location>
</feature>
<feature type="helix" evidence="9">
    <location>
        <begin position="1230"/>
        <end position="1245"/>
    </location>
</feature>
<feature type="helix" evidence="9">
    <location>
        <begin position="1253"/>
        <end position="1255"/>
    </location>
</feature>
<feature type="strand" evidence="9">
    <location>
        <begin position="1256"/>
        <end position="1262"/>
    </location>
</feature>
<feature type="strand" evidence="9">
    <location>
        <begin position="1265"/>
        <end position="1269"/>
    </location>
</feature>
<feature type="helix" evidence="9">
    <location>
        <begin position="1290"/>
        <end position="1292"/>
    </location>
</feature>
<feature type="strand" evidence="9">
    <location>
        <begin position="1299"/>
        <end position="1304"/>
    </location>
</feature>
<evidence type="ECO:0000250" key="1"/>
<evidence type="ECO:0000250" key="2">
    <source>
        <dbReference type="UniProtKB" id="Q9QZC2"/>
    </source>
</evidence>
<evidence type="ECO:0000255" key="3"/>
<evidence type="ECO:0000255" key="4">
    <source>
        <dbReference type="PROSITE-ProRule" id="PRU00352"/>
    </source>
</evidence>
<evidence type="ECO:0000255" key="5">
    <source>
        <dbReference type="PROSITE-ProRule" id="PRU00498"/>
    </source>
</evidence>
<evidence type="ECO:0000269" key="6">
    <source>
    </source>
</evidence>
<evidence type="ECO:0000269" key="7">
    <source>
    </source>
</evidence>
<evidence type="ECO:0000305" key="8"/>
<evidence type="ECO:0007829" key="9">
    <source>
        <dbReference type="PDB" id="3KUZ"/>
    </source>
</evidence>
<evidence type="ECO:0007829" key="10">
    <source>
        <dbReference type="PDB" id="3NVN"/>
    </source>
</evidence>
<evidence type="ECO:0007829" key="11">
    <source>
        <dbReference type="PDB" id="3NVQ"/>
    </source>
</evidence>
<evidence type="ECO:0007829" key="12">
    <source>
        <dbReference type="PDB" id="6VXK"/>
    </source>
</evidence>
<comment type="function">
    <text evidence="1 6">Receptor for SEMA7A, for smallpox semaphorin A39R, vaccinia virus semaphorin A39R and for herpesvirus Sema protein. Binding of semaphorins triggers cellular responses leading to the rearrangement of the cytoskeleton and to secretion of IL6 and IL8 (By similarity).</text>
</comment>
<comment type="subunit">
    <text evidence="6 7">Monomer. Homodimer. Interacts with SEMA7A.</text>
</comment>
<comment type="interaction">
    <interactant intactId="EBI-2927384">
        <id>O60486</id>
    </interactant>
    <interactant intactId="EBI-1753538">
        <id>O75326</id>
        <label>SEMA7A</label>
    </interactant>
    <organismsDiffer>false</organismsDiffer>
    <experiments>4</experiments>
</comment>
<comment type="interaction">
    <interactant intactId="EBI-2927384">
        <id>O60486</id>
    </interactant>
    <interactant intactId="EBI-2927425">
        <id>Q8JL80</id>
        <label>EVM139</label>
    </interactant>
    <organismsDiffer>true</organismsDiffer>
    <experiments>3</experiments>
</comment>
<comment type="subcellular location">
    <subcellularLocation>
        <location evidence="8">Membrane</location>
        <topology evidence="8">Single-pass type I membrane protein</topology>
    </subcellularLocation>
</comment>
<comment type="tissue specificity">
    <text evidence="7">Detected in heart, brain, lung, spleen and placenta.</text>
</comment>
<comment type="PTM">
    <text evidence="6 7">N-glycosylated.</text>
</comment>
<comment type="similarity">
    <text evidence="8">Belongs to the plexin family.</text>
</comment>
<sequence length="1568" mass="175742">MEVSRRKAPPRPPRPAAPLPLLAYLLALAAPGRGADEPVWRSEQAIGAIAASQEDGVFVASGSCLDQLDYSLEHSLSRLYRDQAGNCTEPVSLAPPARPRPGSSFSKLLLPYREGAAGLGGLLLTGWTFDRGACEVRPLGNLSRNSLRNGTEVVSCHPQGSTAGVVYRAGRNNRWYLAVAATYVLPEPETASRCNPAASDHDTAIALKDTEGRSLATQELGRLKLCEGAGSLHFVDAFLWNGSIYFPYYPYNYTSGAATGWPSMARIAQSTEVLFQGQASLDCGHGHPDGRRLLLSSSLVEALDVWAGVFSAAAGEGQERRSPTTTALCLFRMSEIQARAKRVSWDFKTAESHCKEGDQPERVQPIASSTLIHSDLTSVYGTVVMNRTVLFLGTGDGQLLKVILGENLTSNCPEVIYEIKEETPVFYKLVPDPVKNIYIYLTAGKEVRRIRVANCNKHKSCSECLTATDPHCGWCHSLQRCTFQGDCVHSENLENWLDISSGAKKCPKIQIIRSSKEKTTVTMVGSFSPRHSKCMVKNVDSSRELCQNKSQPNRTCTCSIPTRATYKDVSVVNVMFSFGSWNLSDRFNFTNCSSLKECPACVETGCAWCKSARRCIHPFTACDPSDYERNQEQCPVAVEKTSGGGRPKENKGNRTNQALQVFYIKSIEPQKVSTLGKSNVIVTGANFTRASNITMILKGTSTCDKDVIQVSHVLNDTHMKFSLPSSRKEMKDVCIQFDGGNCSSVGSLSYIALPHCSLIFPATTWISGGQNITMMGRNFDVIDNLIISHELKGNINVSEYCVATYCGFLAPSLKSSKVRTNVTVKLRVQDTYLDCGTLQYREDPRFTGYRVESEVDTELEVKIQKENDNFNISKKDIEITLFHGENGQLNCSFENITRNQDLTTILCKIKGIKTASTIANSSKKVRVKLGNLELYVEQESVPSTWYFLIVLPVLLVIVIFAAVGVTRHKSKELSRKQSQQLELLESELRKEIRDGFAELQMDKLDVVDSFGTVPFLDYKHFALRTFFPESGGFTHIFTEDMHNRDANDKNESLTALDALICNKSFLVTVIHTLEKQKNFSVKDRCLFASFLTIALQTKLVYLTSILEVLTRDLMEQCSNMQPKLMLRRTESVVEKLLTNWMSVCLSGFLRETVGEPFYLLVTTLNQKINKGPVDVITCKALYTLNEDWLLWQVPEFSTVALNVVFEKIPENESADVCRNISVNVLDCDTIGQAKEKIFQAFLSKNGSPYGLQLNEIGLELQMGTRQKELLDIDSSSVILEDGITKLNTIGHYEISNGSTIKVFKKIANFTSDVEYSDDHCHLILPDSEAFQDVQGKRHRGKHKFKVKEMYLTKLLSTKVAIHSVLEKLFRSIWSLPNSRAPFAIKYFFDFLDAQAENKKITDPDVVHIWKTNSLPLRFWVNILKNPQFVFDIKKTPHIDGCLSVIAQAFMDAFSLTEQQLGKEAPTNKLLYAKDIPTYKEEVKSYYKAIRDLPPLSSSEMEEFLTQESKKHENEFNEEVALTEIYKYIVKYFDEILNKLERERGLEEAQKQLLHVKVLFDEKKKCKWM</sequence>
<gene>
    <name type="primary">PLXNC1</name>
    <name type="synonym">VESPR</name>
</gene>